<organism>
    <name type="scientific">Xanthomonas oryzae pv. oryzae (strain PXO99A)</name>
    <dbReference type="NCBI Taxonomy" id="360094"/>
    <lineage>
        <taxon>Bacteria</taxon>
        <taxon>Pseudomonadati</taxon>
        <taxon>Pseudomonadota</taxon>
        <taxon>Gammaproteobacteria</taxon>
        <taxon>Lysobacterales</taxon>
        <taxon>Lysobacteraceae</taxon>
        <taxon>Xanthomonas</taxon>
    </lineage>
</organism>
<dbReference type="EC" id="3.5.2.7" evidence="1"/>
<dbReference type="EMBL" id="CP000967">
    <property type="protein sequence ID" value="ACD58765.1"/>
    <property type="molecule type" value="Genomic_DNA"/>
</dbReference>
<dbReference type="RefSeq" id="WP_011259060.1">
    <property type="nucleotide sequence ID" value="NC_010717.2"/>
</dbReference>
<dbReference type="SMR" id="B2SJI1"/>
<dbReference type="KEGG" id="xop:PXO_00726"/>
<dbReference type="eggNOG" id="COG1228">
    <property type="taxonomic scope" value="Bacteria"/>
</dbReference>
<dbReference type="HOGENOM" id="CLU_041647_0_0_6"/>
<dbReference type="UniPathway" id="UPA00379">
    <property type="reaction ID" value="UER00551"/>
</dbReference>
<dbReference type="Proteomes" id="UP000001740">
    <property type="component" value="Chromosome"/>
</dbReference>
<dbReference type="GO" id="GO:0005737">
    <property type="term" value="C:cytoplasm"/>
    <property type="evidence" value="ECO:0007669"/>
    <property type="project" value="UniProtKB-SubCell"/>
</dbReference>
<dbReference type="GO" id="GO:0050480">
    <property type="term" value="F:imidazolonepropionase activity"/>
    <property type="evidence" value="ECO:0007669"/>
    <property type="project" value="UniProtKB-UniRule"/>
</dbReference>
<dbReference type="GO" id="GO:0005506">
    <property type="term" value="F:iron ion binding"/>
    <property type="evidence" value="ECO:0007669"/>
    <property type="project" value="UniProtKB-UniRule"/>
</dbReference>
<dbReference type="GO" id="GO:0008270">
    <property type="term" value="F:zinc ion binding"/>
    <property type="evidence" value="ECO:0007669"/>
    <property type="project" value="UniProtKB-UniRule"/>
</dbReference>
<dbReference type="GO" id="GO:0019556">
    <property type="term" value="P:L-histidine catabolic process to glutamate and formamide"/>
    <property type="evidence" value="ECO:0007669"/>
    <property type="project" value="UniProtKB-UniPathway"/>
</dbReference>
<dbReference type="GO" id="GO:0019557">
    <property type="term" value="P:L-histidine catabolic process to glutamate and formate"/>
    <property type="evidence" value="ECO:0007669"/>
    <property type="project" value="UniProtKB-UniPathway"/>
</dbReference>
<dbReference type="FunFam" id="3.20.20.140:FF:000007">
    <property type="entry name" value="Imidazolonepropionase"/>
    <property type="match status" value="1"/>
</dbReference>
<dbReference type="Gene3D" id="3.20.20.140">
    <property type="entry name" value="Metal-dependent hydrolases"/>
    <property type="match status" value="1"/>
</dbReference>
<dbReference type="Gene3D" id="2.30.40.10">
    <property type="entry name" value="Urease, subunit C, domain 1"/>
    <property type="match status" value="1"/>
</dbReference>
<dbReference type="HAMAP" id="MF_00372">
    <property type="entry name" value="HutI"/>
    <property type="match status" value="1"/>
</dbReference>
<dbReference type="InterPro" id="IPR013108">
    <property type="entry name" value="Amidohydro_3"/>
</dbReference>
<dbReference type="InterPro" id="IPR005920">
    <property type="entry name" value="HutI"/>
</dbReference>
<dbReference type="InterPro" id="IPR011059">
    <property type="entry name" value="Metal-dep_hydrolase_composite"/>
</dbReference>
<dbReference type="InterPro" id="IPR032466">
    <property type="entry name" value="Metal_Hydrolase"/>
</dbReference>
<dbReference type="NCBIfam" id="TIGR01224">
    <property type="entry name" value="hutI"/>
    <property type="match status" value="1"/>
</dbReference>
<dbReference type="PANTHER" id="PTHR42752">
    <property type="entry name" value="IMIDAZOLONEPROPIONASE"/>
    <property type="match status" value="1"/>
</dbReference>
<dbReference type="PANTHER" id="PTHR42752:SF1">
    <property type="entry name" value="IMIDAZOLONEPROPIONASE-RELATED"/>
    <property type="match status" value="1"/>
</dbReference>
<dbReference type="Pfam" id="PF07969">
    <property type="entry name" value="Amidohydro_3"/>
    <property type="match status" value="1"/>
</dbReference>
<dbReference type="SUPFAM" id="SSF51338">
    <property type="entry name" value="Composite domain of metallo-dependent hydrolases"/>
    <property type="match status" value="1"/>
</dbReference>
<dbReference type="SUPFAM" id="SSF51556">
    <property type="entry name" value="Metallo-dependent hydrolases"/>
    <property type="match status" value="1"/>
</dbReference>
<evidence type="ECO:0000255" key="1">
    <source>
        <dbReference type="HAMAP-Rule" id="MF_00372"/>
    </source>
</evidence>
<name>HUTI_XANOP</name>
<proteinExistence type="inferred from homology"/>
<accession>B2SJI1</accession>
<gene>
    <name evidence="1" type="primary">hutI</name>
    <name type="ordered locus">PXO_00726</name>
</gene>
<sequence>MHCDVLWHNAQLMTLDAADGGLGIVDDGTVACQQGRIVYAGPAAQAPALQPHATHDCQRRWISPGLIDCHTHLVYAGNRANEFEQRLRGASYADIAAAGGGIVATVRATRAADDAALLAASLPRLDAMLGEGVTTLEIKSGYGLTLDDEIKQLRVARQLAALRKVEVVPTFLGAHAVPPGGDAQRYTDQVCTQMIPAIAAQGLAEAVDVFCEHLAFSHAQAEQVFIAAQAHGLHIKIHAEQLSNQHGAELAARYGALSADHIEYLDQAGIAAMAGAGTVAVLLPGAFYFTRDTQVPPIAALRAAGVPLALATDCNPGTSPLTSPLLAMNMAATLFRMTVDECIAGFTREAARALGRSERLGRLRAGMDCDLAIWDIDAPADLVYRMGFNPLHARVLRGHLC</sequence>
<reference key="1">
    <citation type="journal article" date="2008" name="BMC Genomics">
        <title>Genome sequence and rapid evolution of the rice pathogen Xanthomonas oryzae pv. oryzae PXO99A.</title>
        <authorList>
            <person name="Salzberg S.L."/>
            <person name="Sommer D.D."/>
            <person name="Schatz M.C."/>
            <person name="Phillippy A.M."/>
            <person name="Rabinowicz P.D."/>
            <person name="Tsuge S."/>
            <person name="Furutani A."/>
            <person name="Ochiai H."/>
            <person name="Delcher A.L."/>
            <person name="Kelley D."/>
            <person name="Madupu R."/>
            <person name="Puiu D."/>
            <person name="Radune D."/>
            <person name="Shumway M."/>
            <person name="Trapnell C."/>
            <person name="Aparna G."/>
            <person name="Jha G."/>
            <person name="Pandey A."/>
            <person name="Patil P.B."/>
            <person name="Ishihara H."/>
            <person name="Meyer D.F."/>
            <person name="Szurek B."/>
            <person name="Verdier V."/>
            <person name="Koebnik R."/>
            <person name="Dow J.M."/>
            <person name="Ryan R.P."/>
            <person name="Hirata H."/>
            <person name="Tsuyumu S."/>
            <person name="Won Lee S."/>
            <person name="Seo Y.-S."/>
            <person name="Sriariyanum M."/>
            <person name="Ronald P.C."/>
            <person name="Sonti R.V."/>
            <person name="Van Sluys M.-A."/>
            <person name="Leach J.E."/>
            <person name="White F.F."/>
            <person name="Bogdanove A.J."/>
        </authorList>
    </citation>
    <scope>NUCLEOTIDE SEQUENCE [LARGE SCALE GENOMIC DNA]</scope>
    <source>
        <strain>PXO99A</strain>
    </source>
</reference>
<feature type="chain" id="PRO_1000121563" description="Imidazolonepropionase">
    <location>
        <begin position="1"/>
        <end position="401"/>
    </location>
</feature>
<feature type="binding site" evidence="1">
    <location>
        <position position="70"/>
    </location>
    <ligand>
        <name>Fe(3+)</name>
        <dbReference type="ChEBI" id="CHEBI:29034"/>
    </ligand>
</feature>
<feature type="binding site" evidence="1">
    <location>
        <position position="70"/>
    </location>
    <ligand>
        <name>Zn(2+)</name>
        <dbReference type="ChEBI" id="CHEBI:29105"/>
    </ligand>
</feature>
<feature type="binding site" evidence="1">
    <location>
        <position position="72"/>
    </location>
    <ligand>
        <name>Fe(3+)</name>
        <dbReference type="ChEBI" id="CHEBI:29034"/>
    </ligand>
</feature>
<feature type="binding site" evidence="1">
    <location>
        <position position="72"/>
    </location>
    <ligand>
        <name>Zn(2+)</name>
        <dbReference type="ChEBI" id="CHEBI:29105"/>
    </ligand>
</feature>
<feature type="binding site" evidence="1">
    <location>
        <position position="79"/>
    </location>
    <ligand>
        <name>4-imidazolone-5-propanoate</name>
        <dbReference type="ChEBI" id="CHEBI:77893"/>
    </ligand>
</feature>
<feature type="binding site" evidence="1">
    <location>
        <position position="142"/>
    </location>
    <ligand>
        <name>4-imidazolone-5-propanoate</name>
        <dbReference type="ChEBI" id="CHEBI:77893"/>
    </ligand>
</feature>
<feature type="binding site" evidence="1">
    <location>
        <position position="142"/>
    </location>
    <ligand>
        <name>N-formimidoyl-L-glutamate</name>
        <dbReference type="ChEBI" id="CHEBI:58928"/>
    </ligand>
</feature>
<feature type="binding site" evidence="1">
    <location>
        <position position="175"/>
    </location>
    <ligand>
        <name>4-imidazolone-5-propanoate</name>
        <dbReference type="ChEBI" id="CHEBI:77893"/>
    </ligand>
</feature>
<feature type="binding site" evidence="1">
    <location>
        <position position="238"/>
    </location>
    <ligand>
        <name>Fe(3+)</name>
        <dbReference type="ChEBI" id="CHEBI:29034"/>
    </ligand>
</feature>
<feature type="binding site" evidence="1">
    <location>
        <position position="238"/>
    </location>
    <ligand>
        <name>Zn(2+)</name>
        <dbReference type="ChEBI" id="CHEBI:29105"/>
    </ligand>
</feature>
<feature type="binding site" evidence="1">
    <location>
        <position position="241"/>
    </location>
    <ligand>
        <name>4-imidazolone-5-propanoate</name>
        <dbReference type="ChEBI" id="CHEBI:77893"/>
    </ligand>
</feature>
<feature type="binding site" evidence="1">
    <location>
        <position position="313"/>
    </location>
    <ligand>
        <name>Fe(3+)</name>
        <dbReference type="ChEBI" id="CHEBI:29034"/>
    </ligand>
</feature>
<feature type="binding site" evidence="1">
    <location>
        <position position="313"/>
    </location>
    <ligand>
        <name>Zn(2+)</name>
        <dbReference type="ChEBI" id="CHEBI:29105"/>
    </ligand>
</feature>
<feature type="binding site" evidence="1">
    <location>
        <position position="315"/>
    </location>
    <ligand>
        <name>N-formimidoyl-L-glutamate</name>
        <dbReference type="ChEBI" id="CHEBI:58928"/>
    </ligand>
</feature>
<feature type="binding site" evidence="1">
    <location>
        <position position="317"/>
    </location>
    <ligand>
        <name>N-formimidoyl-L-glutamate</name>
        <dbReference type="ChEBI" id="CHEBI:58928"/>
    </ligand>
</feature>
<feature type="binding site" evidence="1">
    <location>
        <position position="318"/>
    </location>
    <ligand>
        <name>4-imidazolone-5-propanoate</name>
        <dbReference type="ChEBI" id="CHEBI:77893"/>
    </ligand>
</feature>
<comment type="function">
    <text evidence="1">Catalyzes the hydrolytic cleavage of the carbon-nitrogen bond in imidazolone-5-propanoate to yield N-formimidoyl-L-glutamate. It is the third step in the universal histidine degradation pathway.</text>
</comment>
<comment type="catalytic activity">
    <reaction evidence="1">
        <text>4-imidazolone-5-propanoate + H2O = N-formimidoyl-L-glutamate</text>
        <dbReference type="Rhea" id="RHEA:23660"/>
        <dbReference type="ChEBI" id="CHEBI:15377"/>
        <dbReference type="ChEBI" id="CHEBI:58928"/>
        <dbReference type="ChEBI" id="CHEBI:77893"/>
        <dbReference type="EC" id="3.5.2.7"/>
    </reaction>
</comment>
<comment type="cofactor">
    <cofactor evidence="1">
        <name>Zn(2+)</name>
        <dbReference type="ChEBI" id="CHEBI:29105"/>
    </cofactor>
    <cofactor evidence="1">
        <name>Fe(3+)</name>
        <dbReference type="ChEBI" id="CHEBI:29034"/>
    </cofactor>
    <text evidence="1">Binds 1 zinc or iron ion per subunit.</text>
</comment>
<comment type="pathway">
    <text evidence="1">Amino-acid degradation; L-histidine degradation into L-glutamate; N-formimidoyl-L-glutamate from L-histidine: step 3/3.</text>
</comment>
<comment type="subcellular location">
    <subcellularLocation>
        <location evidence="1">Cytoplasm</location>
    </subcellularLocation>
</comment>
<comment type="similarity">
    <text evidence="1">Belongs to the metallo-dependent hydrolases superfamily. HutI family.</text>
</comment>
<protein>
    <recommendedName>
        <fullName evidence="1">Imidazolonepropionase</fullName>
        <ecNumber evidence="1">3.5.2.7</ecNumber>
    </recommendedName>
    <alternativeName>
        <fullName evidence="1">Imidazolone-5-propionate hydrolase</fullName>
    </alternativeName>
</protein>
<keyword id="KW-0963">Cytoplasm</keyword>
<keyword id="KW-0369">Histidine metabolism</keyword>
<keyword id="KW-0378">Hydrolase</keyword>
<keyword id="KW-0408">Iron</keyword>
<keyword id="KW-0479">Metal-binding</keyword>
<keyword id="KW-0862">Zinc</keyword>